<feature type="chain" id="PRO_0000404336" description="Regulator of rDNA transcription 14">
    <location>
        <begin position="1"/>
        <end position="219"/>
    </location>
</feature>
<feature type="region of interest" description="Disordered" evidence="2">
    <location>
        <begin position="27"/>
        <end position="79"/>
    </location>
</feature>
<feature type="region of interest" description="Disordered" evidence="2">
    <location>
        <begin position="186"/>
        <end position="219"/>
    </location>
</feature>
<feature type="compositionally biased region" description="Basic residues" evidence="2">
    <location>
        <begin position="34"/>
        <end position="44"/>
    </location>
</feature>
<feature type="compositionally biased region" description="Basic residues" evidence="2">
    <location>
        <begin position="69"/>
        <end position="79"/>
    </location>
</feature>
<sequence length="219" mass="24911">MSFNSNASKYQAENTVDKLFSNILHTSTTSKSVSKSKSKSKSKPKPISSTQLLVNQLQSTNTTANNNNTKRKKHNNNKRINKTLLEEKKFSKFIKYNHIKQKSNKSELDEKYLNKLVRKNINSLNKINKIDDLLIDEELNQIKQELLEENEFVGMGGGQLKGGKRLRKKLLNNTKQVIDEFDGFGEISSSNNNNKKKNSSYPGLTPGLAPVDYEEEDNE</sequence>
<organism>
    <name type="scientific">Candida albicans (strain SC5314 / ATCC MYA-2876)</name>
    <name type="common">Yeast</name>
    <dbReference type="NCBI Taxonomy" id="237561"/>
    <lineage>
        <taxon>Eukaryota</taxon>
        <taxon>Fungi</taxon>
        <taxon>Dikarya</taxon>
        <taxon>Ascomycota</taxon>
        <taxon>Saccharomycotina</taxon>
        <taxon>Pichiomycetes</taxon>
        <taxon>Debaryomycetaceae</taxon>
        <taxon>Candida/Lodderomyces clade</taxon>
        <taxon>Candida</taxon>
    </lineage>
</organism>
<name>RRT14_CANAL</name>
<keyword id="KW-0539">Nucleus</keyword>
<keyword id="KW-1185">Reference proteome</keyword>
<keyword id="KW-0804">Transcription</keyword>
<keyword id="KW-0805">Transcription regulation</keyword>
<dbReference type="EMBL" id="CP017625">
    <property type="protein sequence ID" value="AOW28185.1"/>
    <property type="molecule type" value="Genomic_DNA"/>
</dbReference>
<dbReference type="RefSeq" id="XP_721779.2">
    <property type="nucleotide sequence ID" value="XM_716686.2"/>
</dbReference>
<dbReference type="SMR" id="Q5AJ85"/>
<dbReference type="FunCoup" id="Q5AJ85">
    <property type="interactions" value="277"/>
</dbReference>
<dbReference type="STRING" id="237561.Q5AJ85"/>
<dbReference type="EnsemblFungi" id="C3_01430W_A-T">
    <property type="protein sequence ID" value="C3_01430W_A-T-p1"/>
    <property type="gene ID" value="C3_01430W_A"/>
</dbReference>
<dbReference type="GeneID" id="3636633"/>
<dbReference type="KEGG" id="cal:CAALFM_C301430WA"/>
<dbReference type="CGD" id="CAL0000186307">
    <property type="gene designation" value="orf19.9275"/>
</dbReference>
<dbReference type="VEuPathDB" id="FungiDB:C3_01430W_A"/>
<dbReference type="eggNOG" id="ENOG502S1G1">
    <property type="taxonomic scope" value="Eukaryota"/>
</dbReference>
<dbReference type="HOGENOM" id="CLU_095038_0_0_1"/>
<dbReference type="InParanoid" id="Q5AJ85"/>
<dbReference type="OMA" id="LNNTKQV"/>
<dbReference type="OrthoDB" id="4069371at2759"/>
<dbReference type="PRO" id="PR:Q5AJ85"/>
<dbReference type="Proteomes" id="UP000000559">
    <property type="component" value="Chromosome 3"/>
</dbReference>
<dbReference type="GO" id="GO:0005730">
    <property type="term" value="C:nucleolus"/>
    <property type="evidence" value="ECO:0007669"/>
    <property type="project" value="UniProtKB-SubCell"/>
</dbReference>
<dbReference type="InterPro" id="IPR031404">
    <property type="entry name" value="Rrt14"/>
</dbReference>
<dbReference type="Pfam" id="PF17075">
    <property type="entry name" value="RRT14"/>
    <property type="match status" value="1"/>
</dbReference>
<proteinExistence type="inferred from homology"/>
<gene>
    <name type="primary">RRT14</name>
    <name type="ordered locus">CAALFM_C301430WA</name>
    <name type="ORF">CaO19.1708</name>
    <name type="ORF">CaO19.9275</name>
</gene>
<evidence type="ECO:0000250" key="1"/>
<evidence type="ECO:0000256" key="2">
    <source>
        <dbReference type="SAM" id="MobiDB-lite"/>
    </source>
</evidence>
<evidence type="ECO:0000305" key="3"/>
<comment type="function">
    <text evidence="1">Involved in ribosome biogenesis, probably through modulation of rDNA transcription.</text>
</comment>
<comment type="subcellular location">
    <subcellularLocation>
        <location evidence="1">Nucleus</location>
        <location evidence="1">Nucleolus</location>
    </subcellularLocation>
</comment>
<comment type="similarity">
    <text evidence="3">Belongs to the RRT14 family.</text>
</comment>
<reference key="1">
    <citation type="journal article" date="2004" name="Proc. Natl. Acad. Sci. U.S.A.">
        <title>The diploid genome sequence of Candida albicans.</title>
        <authorList>
            <person name="Jones T."/>
            <person name="Federspiel N.A."/>
            <person name="Chibana H."/>
            <person name="Dungan J."/>
            <person name="Kalman S."/>
            <person name="Magee B.B."/>
            <person name="Newport G."/>
            <person name="Thorstenson Y.R."/>
            <person name="Agabian N."/>
            <person name="Magee P.T."/>
            <person name="Davis R.W."/>
            <person name="Scherer S."/>
        </authorList>
    </citation>
    <scope>NUCLEOTIDE SEQUENCE [LARGE SCALE GENOMIC DNA]</scope>
    <source>
        <strain>SC5314 / ATCC MYA-2876</strain>
    </source>
</reference>
<reference key="2">
    <citation type="journal article" date="2007" name="Genome Biol.">
        <title>Assembly of the Candida albicans genome into sixteen supercontigs aligned on the eight chromosomes.</title>
        <authorList>
            <person name="van het Hoog M."/>
            <person name="Rast T.J."/>
            <person name="Martchenko M."/>
            <person name="Grindle S."/>
            <person name="Dignard D."/>
            <person name="Hogues H."/>
            <person name="Cuomo C."/>
            <person name="Berriman M."/>
            <person name="Scherer S."/>
            <person name="Magee B.B."/>
            <person name="Whiteway M."/>
            <person name="Chibana H."/>
            <person name="Nantel A."/>
            <person name="Magee P.T."/>
        </authorList>
    </citation>
    <scope>GENOME REANNOTATION</scope>
    <source>
        <strain>SC5314 / ATCC MYA-2876</strain>
    </source>
</reference>
<reference key="3">
    <citation type="journal article" date="2013" name="Genome Biol.">
        <title>Assembly of a phased diploid Candida albicans genome facilitates allele-specific measurements and provides a simple model for repeat and indel structure.</title>
        <authorList>
            <person name="Muzzey D."/>
            <person name="Schwartz K."/>
            <person name="Weissman J.S."/>
            <person name="Sherlock G."/>
        </authorList>
    </citation>
    <scope>NUCLEOTIDE SEQUENCE [LARGE SCALE GENOMIC DNA]</scope>
    <scope>GENOME REANNOTATION</scope>
    <source>
        <strain>SC5314 / ATCC MYA-2876</strain>
    </source>
</reference>
<accession>Q5AJ85</accession>
<accession>A0A1D8PJ69</accession>
<protein>
    <recommendedName>
        <fullName>Regulator of rDNA transcription 14</fullName>
    </recommendedName>
</protein>